<name>GATA_BART1</name>
<gene>
    <name evidence="1" type="primary">gatA</name>
    <name type="ordered locus">BT_1143</name>
</gene>
<feature type="chain" id="PRO_1000076121" description="Glutamyl-tRNA(Gln) amidotransferase subunit A">
    <location>
        <begin position="1"/>
        <end position="494"/>
    </location>
</feature>
<feature type="active site" description="Charge relay system" evidence="1">
    <location>
        <position position="79"/>
    </location>
</feature>
<feature type="active site" description="Charge relay system" evidence="1">
    <location>
        <position position="159"/>
    </location>
</feature>
<feature type="active site" description="Acyl-ester intermediate" evidence="1">
    <location>
        <position position="183"/>
    </location>
</feature>
<keyword id="KW-0067">ATP-binding</keyword>
<keyword id="KW-0436">Ligase</keyword>
<keyword id="KW-0547">Nucleotide-binding</keyword>
<keyword id="KW-0648">Protein biosynthesis</keyword>
<evidence type="ECO:0000255" key="1">
    <source>
        <dbReference type="HAMAP-Rule" id="MF_00120"/>
    </source>
</evidence>
<sequence>MTDLTTLTIAQARDALITKKLKATELTEAYLKAIELANPTLNAYVTITAEQARKMAAESDRRLAKGERGLLEGIPLGIKDLFATHGVHTQACSNILDGFKPNYESTITANLWQDGAVMLGKLNMDEFAMGSSNETSYYGPVISPWRKKDSNEKLVPGGSSGGSAAAVAAQICAGATATDTGGSIRQPAAFTGTVGIKPTYGRCSRWGVVAFASSLDQAGPIARDVRDCAILLRSMASFDEKDSTSVNLPVPDYESYLGKSIKGMKIGIPKEYYLAGMSQEIIDLWQKGINWLKEAGAEIRDISLPHTKYALPSYYIIAPAEASSNLARYDGVRFGLRVPGKDIIEMYENTRSVGFGDEVKRRILIGTYVLSSGYYDAGYLRAQKVRTLVKRDFDQCFDSGVDAILTPATPTPAFGIADEKIKNDAVAMYLNDIFTVPVNMAGLPGISVPAGLSSNGLPLGLQLIGKPFAEEVIFQIAHIIEQEAGIFCAKKWWI</sequence>
<accession>A9IU58</accession>
<reference key="1">
    <citation type="journal article" date="2007" name="Nat. Genet.">
        <title>Genomic analysis of Bartonella identifies type IV secretion systems as host adaptability factors.</title>
        <authorList>
            <person name="Saenz H.L."/>
            <person name="Engel P."/>
            <person name="Stoeckli M.C."/>
            <person name="Lanz C."/>
            <person name="Raddatz G."/>
            <person name="Vayssier-Taussat M."/>
            <person name="Birtles R."/>
            <person name="Schuster S.C."/>
            <person name="Dehio C."/>
        </authorList>
    </citation>
    <scope>NUCLEOTIDE SEQUENCE [LARGE SCALE GENOMIC DNA]</scope>
    <source>
        <strain>CIP 105476 / IBS 506</strain>
    </source>
</reference>
<protein>
    <recommendedName>
        <fullName evidence="1">Glutamyl-tRNA(Gln) amidotransferase subunit A</fullName>
        <shortName evidence="1">Glu-ADT subunit A</shortName>
        <ecNumber evidence="1">6.3.5.7</ecNumber>
    </recommendedName>
</protein>
<comment type="function">
    <text evidence="1">Allows the formation of correctly charged Gln-tRNA(Gln) through the transamidation of misacylated Glu-tRNA(Gln) in organisms which lack glutaminyl-tRNA synthetase. The reaction takes place in the presence of glutamine and ATP through an activated gamma-phospho-Glu-tRNA(Gln).</text>
</comment>
<comment type="catalytic activity">
    <reaction evidence="1">
        <text>L-glutamyl-tRNA(Gln) + L-glutamine + ATP + H2O = L-glutaminyl-tRNA(Gln) + L-glutamate + ADP + phosphate + H(+)</text>
        <dbReference type="Rhea" id="RHEA:17521"/>
        <dbReference type="Rhea" id="RHEA-COMP:9681"/>
        <dbReference type="Rhea" id="RHEA-COMP:9684"/>
        <dbReference type="ChEBI" id="CHEBI:15377"/>
        <dbReference type="ChEBI" id="CHEBI:15378"/>
        <dbReference type="ChEBI" id="CHEBI:29985"/>
        <dbReference type="ChEBI" id="CHEBI:30616"/>
        <dbReference type="ChEBI" id="CHEBI:43474"/>
        <dbReference type="ChEBI" id="CHEBI:58359"/>
        <dbReference type="ChEBI" id="CHEBI:78520"/>
        <dbReference type="ChEBI" id="CHEBI:78521"/>
        <dbReference type="ChEBI" id="CHEBI:456216"/>
        <dbReference type="EC" id="6.3.5.7"/>
    </reaction>
</comment>
<comment type="subunit">
    <text evidence="1">Heterotrimer of A, B and C subunits.</text>
</comment>
<comment type="similarity">
    <text evidence="1">Belongs to the amidase family. GatA subfamily.</text>
</comment>
<dbReference type="EC" id="6.3.5.7" evidence="1"/>
<dbReference type="EMBL" id="AM260525">
    <property type="protein sequence ID" value="CAK01515.1"/>
    <property type="molecule type" value="Genomic_DNA"/>
</dbReference>
<dbReference type="RefSeq" id="WP_012231718.1">
    <property type="nucleotide sequence ID" value="NC_010161.1"/>
</dbReference>
<dbReference type="SMR" id="A9IU58"/>
<dbReference type="KEGG" id="btr:BT_1143"/>
<dbReference type="eggNOG" id="COG0154">
    <property type="taxonomic scope" value="Bacteria"/>
</dbReference>
<dbReference type="HOGENOM" id="CLU_009600_0_3_5"/>
<dbReference type="Proteomes" id="UP000001592">
    <property type="component" value="Chromosome"/>
</dbReference>
<dbReference type="GO" id="GO:0030956">
    <property type="term" value="C:glutamyl-tRNA(Gln) amidotransferase complex"/>
    <property type="evidence" value="ECO:0007669"/>
    <property type="project" value="InterPro"/>
</dbReference>
<dbReference type="GO" id="GO:0005524">
    <property type="term" value="F:ATP binding"/>
    <property type="evidence" value="ECO:0007669"/>
    <property type="project" value="UniProtKB-KW"/>
</dbReference>
<dbReference type="GO" id="GO:0050567">
    <property type="term" value="F:glutaminyl-tRNA synthase (glutamine-hydrolyzing) activity"/>
    <property type="evidence" value="ECO:0007669"/>
    <property type="project" value="UniProtKB-UniRule"/>
</dbReference>
<dbReference type="GO" id="GO:0006412">
    <property type="term" value="P:translation"/>
    <property type="evidence" value="ECO:0007669"/>
    <property type="project" value="UniProtKB-UniRule"/>
</dbReference>
<dbReference type="Gene3D" id="3.90.1300.10">
    <property type="entry name" value="Amidase signature (AS) domain"/>
    <property type="match status" value="1"/>
</dbReference>
<dbReference type="HAMAP" id="MF_00120">
    <property type="entry name" value="GatA"/>
    <property type="match status" value="1"/>
</dbReference>
<dbReference type="InterPro" id="IPR000120">
    <property type="entry name" value="Amidase"/>
</dbReference>
<dbReference type="InterPro" id="IPR020556">
    <property type="entry name" value="Amidase_CS"/>
</dbReference>
<dbReference type="InterPro" id="IPR023631">
    <property type="entry name" value="Amidase_dom"/>
</dbReference>
<dbReference type="InterPro" id="IPR036928">
    <property type="entry name" value="AS_sf"/>
</dbReference>
<dbReference type="InterPro" id="IPR004412">
    <property type="entry name" value="GatA"/>
</dbReference>
<dbReference type="NCBIfam" id="TIGR00132">
    <property type="entry name" value="gatA"/>
    <property type="match status" value="1"/>
</dbReference>
<dbReference type="PANTHER" id="PTHR11895:SF151">
    <property type="entry name" value="GLUTAMYL-TRNA(GLN) AMIDOTRANSFERASE SUBUNIT A"/>
    <property type="match status" value="1"/>
</dbReference>
<dbReference type="PANTHER" id="PTHR11895">
    <property type="entry name" value="TRANSAMIDASE"/>
    <property type="match status" value="1"/>
</dbReference>
<dbReference type="Pfam" id="PF01425">
    <property type="entry name" value="Amidase"/>
    <property type="match status" value="1"/>
</dbReference>
<dbReference type="SUPFAM" id="SSF75304">
    <property type="entry name" value="Amidase signature (AS) enzymes"/>
    <property type="match status" value="1"/>
</dbReference>
<dbReference type="PROSITE" id="PS00571">
    <property type="entry name" value="AMIDASES"/>
    <property type="match status" value="1"/>
</dbReference>
<proteinExistence type="inferred from homology"/>
<organism>
    <name type="scientific">Bartonella tribocorum (strain CIP 105476 / IBS 506)</name>
    <dbReference type="NCBI Taxonomy" id="382640"/>
    <lineage>
        <taxon>Bacteria</taxon>
        <taxon>Pseudomonadati</taxon>
        <taxon>Pseudomonadota</taxon>
        <taxon>Alphaproteobacteria</taxon>
        <taxon>Hyphomicrobiales</taxon>
        <taxon>Bartonellaceae</taxon>
        <taxon>Bartonella</taxon>
    </lineage>
</organism>